<name>GPDA_PASMU</name>
<reference key="1">
    <citation type="journal article" date="2001" name="Proc. Natl. Acad. Sci. U.S.A.">
        <title>Complete genomic sequence of Pasteurella multocida Pm70.</title>
        <authorList>
            <person name="May B.J."/>
            <person name="Zhang Q."/>
            <person name="Li L.L."/>
            <person name="Paustian M.L."/>
            <person name="Whittam T.S."/>
            <person name="Kapur V."/>
        </authorList>
    </citation>
    <scope>NUCLEOTIDE SEQUENCE [LARGE SCALE GENOMIC DNA]</scope>
    <source>
        <strain>Pm70</strain>
    </source>
</reference>
<feature type="chain" id="PRO_0000138005" description="Glycerol-3-phosphate dehydrogenase [NAD(P)+]">
    <location>
        <begin position="1"/>
        <end position="337"/>
    </location>
</feature>
<feature type="active site" description="Proton acceptor" evidence="1">
    <location>
        <position position="197"/>
    </location>
</feature>
<feature type="binding site" evidence="1">
    <location>
        <position position="17"/>
    </location>
    <ligand>
        <name>NADPH</name>
        <dbReference type="ChEBI" id="CHEBI:57783"/>
    </ligand>
</feature>
<feature type="binding site" evidence="1">
    <location>
        <position position="18"/>
    </location>
    <ligand>
        <name>NADPH</name>
        <dbReference type="ChEBI" id="CHEBI:57783"/>
    </ligand>
</feature>
<feature type="binding site" evidence="1">
    <location>
        <position position="38"/>
    </location>
    <ligand>
        <name>NADPH</name>
        <dbReference type="ChEBI" id="CHEBI:57783"/>
    </ligand>
</feature>
<feature type="binding site" evidence="1">
    <location>
        <position position="112"/>
    </location>
    <ligand>
        <name>NADPH</name>
        <dbReference type="ChEBI" id="CHEBI:57783"/>
    </ligand>
</feature>
<feature type="binding site" evidence="1">
    <location>
        <position position="112"/>
    </location>
    <ligand>
        <name>sn-glycerol 3-phosphate</name>
        <dbReference type="ChEBI" id="CHEBI:57597"/>
    </ligand>
</feature>
<feature type="binding site" evidence="1">
    <location>
        <position position="141"/>
    </location>
    <ligand>
        <name>sn-glycerol 3-phosphate</name>
        <dbReference type="ChEBI" id="CHEBI:57597"/>
    </ligand>
</feature>
<feature type="binding site" evidence="1">
    <location>
        <position position="143"/>
    </location>
    <ligand>
        <name>sn-glycerol 3-phosphate</name>
        <dbReference type="ChEBI" id="CHEBI:57597"/>
    </ligand>
</feature>
<feature type="binding site" evidence="1">
    <location>
        <position position="145"/>
    </location>
    <ligand>
        <name>NADPH</name>
        <dbReference type="ChEBI" id="CHEBI:57783"/>
    </ligand>
</feature>
<feature type="binding site" evidence="1">
    <location>
        <position position="197"/>
    </location>
    <ligand>
        <name>sn-glycerol 3-phosphate</name>
        <dbReference type="ChEBI" id="CHEBI:57597"/>
    </ligand>
</feature>
<feature type="binding site" evidence="1">
    <location>
        <position position="250"/>
    </location>
    <ligand>
        <name>sn-glycerol 3-phosphate</name>
        <dbReference type="ChEBI" id="CHEBI:57597"/>
    </ligand>
</feature>
<feature type="binding site" evidence="1">
    <location>
        <position position="260"/>
    </location>
    <ligand>
        <name>sn-glycerol 3-phosphate</name>
        <dbReference type="ChEBI" id="CHEBI:57597"/>
    </ligand>
</feature>
<feature type="binding site" evidence="1">
    <location>
        <position position="261"/>
    </location>
    <ligand>
        <name>NADPH</name>
        <dbReference type="ChEBI" id="CHEBI:57783"/>
    </ligand>
</feature>
<feature type="binding site" evidence="1">
    <location>
        <position position="261"/>
    </location>
    <ligand>
        <name>sn-glycerol 3-phosphate</name>
        <dbReference type="ChEBI" id="CHEBI:57597"/>
    </ligand>
</feature>
<feature type="binding site" evidence="1">
    <location>
        <position position="262"/>
    </location>
    <ligand>
        <name>sn-glycerol 3-phosphate</name>
        <dbReference type="ChEBI" id="CHEBI:57597"/>
    </ligand>
</feature>
<feature type="binding site" evidence="1">
    <location>
        <position position="285"/>
    </location>
    <ligand>
        <name>NADPH</name>
        <dbReference type="ChEBI" id="CHEBI:57783"/>
    </ligand>
</feature>
<feature type="binding site" evidence="1">
    <location>
        <position position="287"/>
    </location>
    <ligand>
        <name>NADPH</name>
        <dbReference type="ChEBI" id="CHEBI:57783"/>
    </ligand>
</feature>
<organism>
    <name type="scientific">Pasteurella multocida (strain Pm70)</name>
    <dbReference type="NCBI Taxonomy" id="272843"/>
    <lineage>
        <taxon>Bacteria</taxon>
        <taxon>Pseudomonadati</taxon>
        <taxon>Pseudomonadota</taxon>
        <taxon>Gammaproteobacteria</taxon>
        <taxon>Pasteurellales</taxon>
        <taxon>Pasteurellaceae</taxon>
        <taxon>Pasteurella</taxon>
    </lineage>
</organism>
<accession>Q9CL17</accession>
<proteinExistence type="inferred from homology"/>
<protein>
    <recommendedName>
        <fullName evidence="1">Glycerol-3-phosphate dehydrogenase [NAD(P)+]</fullName>
        <ecNumber evidence="1">1.1.1.94</ecNumber>
    </recommendedName>
    <alternativeName>
        <fullName evidence="1">NAD(P)(+)-dependent glycerol-3-phosphate dehydrogenase</fullName>
    </alternativeName>
    <alternativeName>
        <fullName evidence="1">NAD(P)H-dependent dihydroxyacetone-phosphate reductase</fullName>
    </alternativeName>
</protein>
<gene>
    <name evidence="1" type="primary">gpsA</name>
    <name type="ordered locus">PM1431</name>
</gene>
<evidence type="ECO:0000255" key="1">
    <source>
        <dbReference type="HAMAP-Rule" id="MF_00394"/>
    </source>
</evidence>
<sequence>MNTTVATSPITVLGAGSYGTALAIAFSRNGFPTYLWGHDPVHMQRLSEERQNNAFLPNIAFPDALHIEFDLASALSQSRDLLIVVPSHVFGEVIDKIKPYLRPDHRIAWATKGLERNTGRLLQEVIEEKLGTQHPLAVLSGPTFAKELAAGLPTAIALASNNEQFALEFQARIHCSKHFRVYINQDMIGVQLGGAIKNVIAISAGMSDGMGFGANARTALITRGIAEISRLGASLGANPNTFMGMSGLGDLVLTCTDDQSRNRRFGIMLGQGFSAQTAMDNIGQVVEGFYNAKEAYLLAQRQGIEMPITEQVYQVLFCGKNAQDVAASLLGRERKGE</sequence>
<keyword id="KW-0963">Cytoplasm</keyword>
<keyword id="KW-0444">Lipid biosynthesis</keyword>
<keyword id="KW-0443">Lipid metabolism</keyword>
<keyword id="KW-0520">NAD</keyword>
<keyword id="KW-0521">NADP</keyword>
<keyword id="KW-0547">Nucleotide-binding</keyword>
<keyword id="KW-0560">Oxidoreductase</keyword>
<keyword id="KW-0594">Phospholipid biosynthesis</keyword>
<keyword id="KW-1208">Phospholipid metabolism</keyword>
<keyword id="KW-1185">Reference proteome</keyword>
<comment type="function">
    <text evidence="1">Catalyzes the reduction of the glycolytic intermediate dihydroxyacetone phosphate (DHAP) to sn-glycerol 3-phosphate (G3P), the key precursor for phospholipid synthesis.</text>
</comment>
<comment type="catalytic activity">
    <reaction evidence="1">
        <text>sn-glycerol 3-phosphate + NAD(+) = dihydroxyacetone phosphate + NADH + H(+)</text>
        <dbReference type="Rhea" id="RHEA:11092"/>
        <dbReference type="ChEBI" id="CHEBI:15378"/>
        <dbReference type="ChEBI" id="CHEBI:57540"/>
        <dbReference type="ChEBI" id="CHEBI:57597"/>
        <dbReference type="ChEBI" id="CHEBI:57642"/>
        <dbReference type="ChEBI" id="CHEBI:57945"/>
        <dbReference type="EC" id="1.1.1.94"/>
    </reaction>
    <physiologicalReaction direction="right-to-left" evidence="1">
        <dbReference type="Rhea" id="RHEA:11094"/>
    </physiologicalReaction>
</comment>
<comment type="catalytic activity">
    <reaction evidence="1">
        <text>sn-glycerol 3-phosphate + NADP(+) = dihydroxyacetone phosphate + NADPH + H(+)</text>
        <dbReference type="Rhea" id="RHEA:11096"/>
        <dbReference type="ChEBI" id="CHEBI:15378"/>
        <dbReference type="ChEBI" id="CHEBI:57597"/>
        <dbReference type="ChEBI" id="CHEBI:57642"/>
        <dbReference type="ChEBI" id="CHEBI:57783"/>
        <dbReference type="ChEBI" id="CHEBI:58349"/>
        <dbReference type="EC" id="1.1.1.94"/>
    </reaction>
    <physiologicalReaction direction="right-to-left" evidence="1">
        <dbReference type="Rhea" id="RHEA:11098"/>
    </physiologicalReaction>
</comment>
<comment type="pathway">
    <text evidence="1">Membrane lipid metabolism; glycerophospholipid metabolism.</text>
</comment>
<comment type="subcellular location">
    <subcellularLocation>
        <location evidence="1">Cytoplasm</location>
    </subcellularLocation>
</comment>
<comment type="similarity">
    <text evidence="1">Belongs to the NAD-dependent glycerol-3-phosphate dehydrogenase family.</text>
</comment>
<dbReference type="EC" id="1.1.1.94" evidence="1"/>
<dbReference type="EMBL" id="AE004439">
    <property type="protein sequence ID" value="AAK03515.1"/>
    <property type="molecule type" value="Genomic_DNA"/>
</dbReference>
<dbReference type="RefSeq" id="WP_005717960.1">
    <property type="nucleotide sequence ID" value="NC_002663.1"/>
</dbReference>
<dbReference type="SMR" id="Q9CL17"/>
<dbReference type="STRING" id="272843.PM1431"/>
<dbReference type="EnsemblBacteria" id="AAK03515">
    <property type="protein sequence ID" value="AAK03515"/>
    <property type="gene ID" value="PM1431"/>
</dbReference>
<dbReference type="GeneID" id="77207010"/>
<dbReference type="KEGG" id="pmu:PM1431"/>
<dbReference type="HOGENOM" id="CLU_033449_0_2_6"/>
<dbReference type="OrthoDB" id="9812273at2"/>
<dbReference type="UniPathway" id="UPA00940"/>
<dbReference type="Proteomes" id="UP000000809">
    <property type="component" value="Chromosome"/>
</dbReference>
<dbReference type="GO" id="GO:0005829">
    <property type="term" value="C:cytosol"/>
    <property type="evidence" value="ECO:0007669"/>
    <property type="project" value="TreeGrafter"/>
</dbReference>
<dbReference type="GO" id="GO:0047952">
    <property type="term" value="F:glycerol-3-phosphate dehydrogenase [NAD(P)+] activity"/>
    <property type="evidence" value="ECO:0007669"/>
    <property type="project" value="UniProtKB-UniRule"/>
</dbReference>
<dbReference type="GO" id="GO:0051287">
    <property type="term" value="F:NAD binding"/>
    <property type="evidence" value="ECO:0007669"/>
    <property type="project" value="InterPro"/>
</dbReference>
<dbReference type="GO" id="GO:0005975">
    <property type="term" value="P:carbohydrate metabolic process"/>
    <property type="evidence" value="ECO:0007669"/>
    <property type="project" value="InterPro"/>
</dbReference>
<dbReference type="GO" id="GO:0046167">
    <property type="term" value="P:glycerol-3-phosphate biosynthetic process"/>
    <property type="evidence" value="ECO:0007669"/>
    <property type="project" value="UniProtKB-UniRule"/>
</dbReference>
<dbReference type="GO" id="GO:0046168">
    <property type="term" value="P:glycerol-3-phosphate catabolic process"/>
    <property type="evidence" value="ECO:0007669"/>
    <property type="project" value="InterPro"/>
</dbReference>
<dbReference type="GO" id="GO:0046474">
    <property type="term" value="P:glycerophospholipid biosynthetic process"/>
    <property type="evidence" value="ECO:0007669"/>
    <property type="project" value="TreeGrafter"/>
</dbReference>
<dbReference type="FunFam" id="1.10.1040.10:FF:000001">
    <property type="entry name" value="Glycerol-3-phosphate dehydrogenase [NAD(P)+]"/>
    <property type="match status" value="1"/>
</dbReference>
<dbReference type="FunFam" id="3.40.50.720:FF:000019">
    <property type="entry name" value="Glycerol-3-phosphate dehydrogenase [NAD(P)+]"/>
    <property type="match status" value="1"/>
</dbReference>
<dbReference type="Gene3D" id="1.10.1040.10">
    <property type="entry name" value="N-(1-d-carboxylethyl)-l-norvaline Dehydrogenase, domain 2"/>
    <property type="match status" value="1"/>
</dbReference>
<dbReference type="Gene3D" id="3.40.50.720">
    <property type="entry name" value="NAD(P)-binding Rossmann-like Domain"/>
    <property type="match status" value="1"/>
</dbReference>
<dbReference type="HAMAP" id="MF_00394">
    <property type="entry name" value="NAD_Glyc3P_dehydrog"/>
    <property type="match status" value="1"/>
</dbReference>
<dbReference type="InterPro" id="IPR008927">
    <property type="entry name" value="6-PGluconate_DH-like_C_sf"/>
</dbReference>
<dbReference type="InterPro" id="IPR013328">
    <property type="entry name" value="6PGD_dom2"/>
</dbReference>
<dbReference type="InterPro" id="IPR006168">
    <property type="entry name" value="G3P_DH_NAD-dep"/>
</dbReference>
<dbReference type="InterPro" id="IPR006109">
    <property type="entry name" value="G3P_DH_NAD-dep_C"/>
</dbReference>
<dbReference type="InterPro" id="IPR011128">
    <property type="entry name" value="G3P_DH_NAD-dep_N"/>
</dbReference>
<dbReference type="InterPro" id="IPR036291">
    <property type="entry name" value="NAD(P)-bd_dom_sf"/>
</dbReference>
<dbReference type="NCBIfam" id="NF000939">
    <property type="entry name" value="PRK00094.1-1"/>
    <property type="match status" value="1"/>
</dbReference>
<dbReference type="NCBIfam" id="NF000940">
    <property type="entry name" value="PRK00094.1-2"/>
    <property type="match status" value="1"/>
</dbReference>
<dbReference type="NCBIfam" id="NF000942">
    <property type="entry name" value="PRK00094.1-4"/>
    <property type="match status" value="1"/>
</dbReference>
<dbReference type="PANTHER" id="PTHR11728">
    <property type="entry name" value="GLYCEROL-3-PHOSPHATE DEHYDROGENASE"/>
    <property type="match status" value="1"/>
</dbReference>
<dbReference type="PANTHER" id="PTHR11728:SF1">
    <property type="entry name" value="GLYCEROL-3-PHOSPHATE DEHYDROGENASE [NAD(+)] 2, CHLOROPLASTIC"/>
    <property type="match status" value="1"/>
</dbReference>
<dbReference type="Pfam" id="PF07479">
    <property type="entry name" value="NAD_Gly3P_dh_C"/>
    <property type="match status" value="1"/>
</dbReference>
<dbReference type="Pfam" id="PF01210">
    <property type="entry name" value="NAD_Gly3P_dh_N"/>
    <property type="match status" value="1"/>
</dbReference>
<dbReference type="PIRSF" id="PIRSF000114">
    <property type="entry name" value="Glycerol-3-P_dh"/>
    <property type="match status" value="1"/>
</dbReference>
<dbReference type="PRINTS" id="PR00077">
    <property type="entry name" value="GPDHDRGNASE"/>
</dbReference>
<dbReference type="SUPFAM" id="SSF48179">
    <property type="entry name" value="6-phosphogluconate dehydrogenase C-terminal domain-like"/>
    <property type="match status" value="1"/>
</dbReference>
<dbReference type="SUPFAM" id="SSF51735">
    <property type="entry name" value="NAD(P)-binding Rossmann-fold domains"/>
    <property type="match status" value="1"/>
</dbReference>
<dbReference type="PROSITE" id="PS00957">
    <property type="entry name" value="NAD_G3PDH"/>
    <property type="match status" value="1"/>
</dbReference>